<organism>
    <name type="scientific">Gluconacetobacter diazotrophicus (strain ATCC 49037 / DSM 5601 / CCUG 37298 / CIP 103539 / LMG 7603 / PAl5)</name>
    <dbReference type="NCBI Taxonomy" id="272568"/>
    <lineage>
        <taxon>Bacteria</taxon>
        <taxon>Pseudomonadati</taxon>
        <taxon>Pseudomonadota</taxon>
        <taxon>Alphaproteobacteria</taxon>
        <taxon>Acetobacterales</taxon>
        <taxon>Acetobacteraceae</taxon>
        <taxon>Gluconacetobacter</taxon>
    </lineage>
</organism>
<proteinExistence type="inferred from homology"/>
<evidence type="ECO:0000255" key="1">
    <source>
        <dbReference type="HAMAP-Rule" id="MF_01554"/>
    </source>
</evidence>
<comment type="function">
    <text evidence="1">Catalyzes the conversion of glucosamine-6-phosphate to glucosamine-1-phosphate.</text>
</comment>
<comment type="catalytic activity">
    <reaction evidence="1">
        <text>alpha-D-glucosamine 1-phosphate = D-glucosamine 6-phosphate</text>
        <dbReference type="Rhea" id="RHEA:23424"/>
        <dbReference type="ChEBI" id="CHEBI:58516"/>
        <dbReference type="ChEBI" id="CHEBI:58725"/>
        <dbReference type="EC" id="5.4.2.10"/>
    </reaction>
</comment>
<comment type="cofactor">
    <cofactor evidence="1">
        <name>Mg(2+)</name>
        <dbReference type="ChEBI" id="CHEBI:18420"/>
    </cofactor>
    <text evidence="1">Binds 1 Mg(2+) ion per subunit.</text>
</comment>
<comment type="PTM">
    <text evidence="1">Activated by phosphorylation.</text>
</comment>
<comment type="similarity">
    <text evidence="1">Belongs to the phosphohexose mutase family.</text>
</comment>
<name>GLMM_GLUDA</name>
<protein>
    <recommendedName>
        <fullName evidence="1">Phosphoglucosamine mutase</fullName>
        <ecNumber evidence="1">5.4.2.10</ecNumber>
    </recommendedName>
</protein>
<feature type="chain" id="PRO_1000201105" description="Phosphoglucosamine mutase">
    <location>
        <begin position="1"/>
        <end position="452"/>
    </location>
</feature>
<feature type="active site" description="Phosphoserine intermediate" evidence="1">
    <location>
        <position position="104"/>
    </location>
</feature>
<feature type="binding site" description="via phosphate group" evidence="1">
    <location>
        <position position="104"/>
    </location>
    <ligand>
        <name>Mg(2+)</name>
        <dbReference type="ChEBI" id="CHEBI:18420"/>
    </ligand>
</feature>
<feature type="binding site" evidence="1">
    <location>
        <position position="245"/>
    </location>
    <ligand>
        <name>Mg(2+)</name>
        <dbReference type="ChEBI" id="CHEBI:18420"/>
    </ligand>
</feature>
<feature type="binding site" evidence="1">
    <location>
        <position position="247"/>
    </location>
    <ligand>
        <name>Mg(2+)</name>
        <dbReference type="ChEBI" id="CHEBI:18420"/>
    </ligand>
</feature>
<feature type="binding site" evidence="1">
    <location>
        <position position="249"/>
    </location>
    <ligand>
        <name>Mg(2+)</name>
        <dbReference type="ChEBI" id="CHEBI:18420"/>
    </ligand>
</feature>
<feature type="modified residue" description="Phosphoserine" evidence="1">
    <location>
        <position position="104"/>
    </location>
</feature>
<gene>
    <name evidence="1" type="primary">glmM</name>
    <name type="ordered locus">GDI0812</name>
    <name type="ordered locus">Gdia_1205</name>
</gene>
<sequence length="452" mass="48393">MSKTRHLFGTDGIRGLANQDPMTVEIAQKLGQAAGLRFTRGVHRHRVLLGKDTRLSGYMIECALVSGFLSAGMDVTLVGPMPTPAIAMLTRSLRADLGVMISASHNPFGDNGIKLFGPDGFKLSDETEAEIEELMRSDLAGRLAAPDRIGRASRLNDAAGRYIENAKASFPRGRRLDGLRIVIDCANGAAYRVAPTALWELGAEVIRIGCEPDGININEQCGSTKPESLCEAVVAHGAHIGIALDGDADRVLIADEKGRLIDGDQILALIARSWGRQGRLNSAQIVATVMSNMGLARCLEGLGLELVRTAVGDRYVVERMRELGANLGGEQSGHMVLSDFATTGDGLVAALQVLAVLVEEGRPASEVCRMFTPFPQMLRNVRFTGKSPLHAPSVQDARRRAEAELGTAGRLLLRESGTEPLVRVMAEAEDPALVERIVAEMCEAIDSAQVVA</sequence>
<dbReference type="EC" id="5.4.2.10" evidence="1"/>
<dbReference type="EMBL" id="CP001189">
    <property type="protein sequence ID" value="ACI50988.1"/>
    <property type="molecule type" value="Genomic_DNA"/>
</dbReference>
<dbReference type="EMBL" id="AM889285">
    <property type="protein sequence ID" value="CAP54755.1"/>
    <property type="molecule type" value="Genomic_DNA"/>
</dbReference>
<dbReference type="RefSeq" id="WP_012223570.1">
    <property type="nucleotide sequence ID" value="NC_010125.1"/>
</dbReference>
<dbReference type="SMR" id="A9HB20"/>
<dbReference type="STRING" id="272568.GDI0812"/>
<dbReference type="KEGG" id="gdi:GDI0812"/>
<dbReference type="KEGG" id="gdj:Gdia_1205"/>
<dbReference type="eggNOG" id="COG1109">
    <property type="taxonomic scope" value="Bacteria"/>
</dbReference>
<dbReference type="HOGENOM" id="CLU_016950_7_0_5"/>
<dbReference type="OrthoDB" id="9803322at2"/>
<dbReference type="Proteomes" id="UP000001176">
    <property type="component" value="Chromosome"/>
</dbReference>
<dbReference type="GO" id="GO:0005829">
    <property type="term" value="C:cytosol"/>
    <property type="evidence" value="ECO:0007669"/>
    <property type="project" value="TreeGrafter"/>
</dbReference>
<dbReference type="GO" id="GO:0000287">
    <property type="term" value="F:magnesium ion binding"/>
    <property type="evidence" value="ECO:0007669"/>
    <property type="project" value="UniProtKB-UniRule"/>
</dbReference>
<dbReference type="GO" id="GO:0008966">
    <property type="term" value="F:phosphoglucosamine mutase activity"/>
    <property type="evidence" value="ECO:0007669"/>
    <property type="project" value="UniProtKB-UniRule"/>
</dbReference>
<dbReference type="GO" id="GO:0004615">
    <property type="term" value="F:phosphomannomutase activity"/>
    <property type="evidence" value="ECO:0007669"/>
    <property type="project" value="TreeGrafter"/>
</dbReference>
<dbReference type="GO" id="GO:0005975">
    <property type="term" value="P:carbohydrate metabolic process"/>
    <property type="evidence" value="ECO:0007669"/>
    <property type="project" value="InterPro"/>
</dbReference>
<dbReference type="GO" id="GO:0009252">
    <property type="term" value="P:peptidoglycan biosynthetic process"/>
    <property type="evidence" value="ECO:0007669"/>
    <property type="project" value="TreeGrafter"/>
</dbReference>
<dbReference type="GO" id="GO:0006048">
    <property type="term" value="P:UDP-N-acetylglucosamine biosynthetic process"/>
    <property type="evidence" value="ECO:0007669"/>
    <property type="project" value="TreeGrafter"/>
</dbReference>
<dbReference type="CDD" id="cd05802">
    <property type="entry name" value="GlmM"/>
    <property type="match status" value="1"/>
</dbReference>
<dbReference type="FunFam" id="3.30.310.50:FF:000001">
    <property type="entry name" value="Phosphoglucosamine mutase"/>
    <property type="match status" value="1"/>
</dbReference>
<dbReference type="FunFam" id="3.40.120.10:FF:000001">
    <property type="entry name" value="Phosphoglucosamine mutase"/>
    <property type="match status" value="1"/>
</dbReference>
<dbReference type="FunFam" id="3.40.120.10:FF:000003">
    <property type="entry name" value="Phosphoglucosamine mutase"/>
    <property type="match status" value="1"/>
</dbReference>
<dbReference type="Gene3D" id="3.40.120.10">
    <property type="entry name" value="Alpha-D-Glucose-1,6-Bisphosphate, subunit A, domain 3"/>
    <property type="match status" value="3"/>
</dbReference>
<dbReference type="Gene3D" id="3.30.310.50">
    <property type="entry name" value="Alpha-D-phosphohexomutase, C-terminal domain"/>
    <property type="match status" value="1"/>
</dbReference>
<dbReference type="HAMAP" id="MF_01554_B">
    <property type="entry name" value="GlmM_B"/>
    <property type="match status" value="1"/>
</dbReference>
<dbReference type="InterPro" id="IPR005844">
    <property type="entry name" value="A-D-PHexomutase_a/b/a-I"/>
</dbReference>
<dbReference type="InterPro" id="IPR016055">
    <property type="entry name" value="A-D-PHexomutase_a/b/a-I/II/III"/>
</dbReference>
<dbReference type="InterPro" id="IPR005845">
    <property type="entry name" value="A-D-PHexomutase_a/b/a-II"/>
</dbReference>
<dbReference type="InterPro" id="IPR005846">
    <property type="entry name" value="A-D-PHexomutase_a/b/a-III"/>
</dbReference>
<dbReference type="InterPro" id="IPR005843">
    <property type="entry name" value="A-D-PHexomutase_C"/>
</dbReference>
<dbReference type="InterPro" id="IPR036900">
    <property type="entry name" value="A-D-PHexomutase_C_sf"/>
</dbReference>
<dbReference type="InterPro" id="IPR016066">
    <property type="entry name" value="A-D-PHexomutase_CS"/>
</dbReference>
<dbReference type="InterPro" id="IPR005841">
    <property type="entry name" value="Alpha-D-phosphohexomutase_SF"/>
</dbReference>
<dbReference type="InterPro" id="IPR006352">
    <property type="entry name" value="GlmM_bact"/>
</dbReference>
<dbReference type="InterPro" id="IPR050060">
    <property type="entry name" value="Phosphoglucosamine_mutase"/>
</dbReference>
<dbReference type="NCBIfam" id="TIGR01455">
    <property type="entry name" value="glmM"/>
    <property type="match status" value="1"/>
</dbReference>
<dbReference type="NCBIfam" id="NF008139">
    <property type="entry name" value="PRK10887.1"/>
    <property type="match status" value="1"/>
</dbReference>
<dbReference type="PANTHER" id="PTHR42946:SF1">
    <property type="entry name" value="PHOSPHOGLUCOMUTASE (ALPHA-D-GLUCOSE-1,6-BISPHOSPHATE-DEPENDENT)"/>
    <property type="match status" value="1"/>
</dbReference>
<dbReference type="PANTHER" id="PTHR42946">
    <property type="entry name" value="PHOSPHOHEXOSE MUTASE"/>
    <property type="match status" value="1"/>
</dbReference>
<dbReference type="Pfam" id="PF02878">
    <property type="entry name" value="PGM_PMM_I"/>
    <property type="match status" value="1"/>
</dbReference>
<dbReference type="Pfam" id="PF02879">
    <property type="entry name" value="PGM_PMM_II"/>
    <property type="match status" value="1"/>
</dbReference>
<dbReference type="Pfam" id="PF02880">
    <property type="entry name" value="PGM_PMM_III"/>
    <property type="match status" value="1"/>
</dbReference>
<dbReference type="Pfam" id="PF00408">
    <property type="entry name" value="PGM_PMM_IV"/>
    <property type="match status" value="1"/>
</dbReference>
<dbReference type="PRINTS" id="PR00509">
    <property type="entry name" value="PGMPMM"/>
</dbReference>
<dbReference type="SUPFAM" id="SSF55957">
    <property type="entry name" value="Phosphoglucomutase, C-terminal domain"/>
    <property type="match status" value="1"/>
</dbReference>
<dbReference type="SUPFAM" id="SSF53738">
    <property type="entry name" value="Phosphoglucomutase, first 3 domains"/>
    <property type="match status" value="3"/>
</dbReference>
<dbReference type="PROSITE" id="PS00710">
    <property type="entry name" value="PGM_PMM"/>
    <property type="match status" value="1"/>
</dbReference>
<keyword id="KW-0413">Isomerase</keyword>
<keyword id="KW-0460">Magnesium</keyword>
<keyword id="KW-0479">Metal-binding</keyword>
<keyword id="KW-0597">Phosphoprotein</keyword>
<keyword id="KW-1185">Reference proteome</keyword>
<reference key="1">
    <citation type="journal article" date="2009" name="BMC Genomics">
        <title>Complete genome sequence of the sugarcane nitrogen-fixing endophyte Gluconacetobacter diazotrophicus Pal5.</title>
        <authorList>
            <person name="Bertalan M."/>
            <person name="Albano R."/>
            <person name="de Padua V."/>
            <person name="Rouws L."/>
            <person name="Rojas C."/>
            <person name="Hemerly A."/>
            <person name="Teixeira K."/>
            <person name="Schwab S."/>
            <person name="Araujo J."/>
            <person name="Oliveira A."/>
            <person name="Franca L."/>
            <person name="Magalhaes V."/>
            <person name="Alqueres S."/>
            <person name="Cardoso A."/>
            <person name="Almeida W."/>
            <person name="Loureiro M.M."/>
            <person name="Nogueira E."/>
            <person name="Cidade D."/>
            <person name="Oliveira D."/>
            <person name="Simao T."/>
            <person name="Macedo J."/>
            <person name="Valadao A."/>
            <person name="Dreschsel M."/>
            <person name="Freitas F."/>
            <person name="Vidal M."/>
            <person name="Guedes H."/>
            <person name="Rodrigues E."/>
            <person name="Meneses C."/>
            <person name="Brioso P."/>
            <person name="Pozzer L."/>
            <person name="Figueiredo D."/>
            <person name="Montano H."/>
            <person name="Junior J."/>
            <person name="de Souza Filho G."/>
            <person name="Martin Quintana Flores V."/>
            <person name="Ferreira B."/>
            <person name="Branco A."/>
            <person name="Gonzalez P."/>
            <person name="Guillobel H."/>
            <person name="Lemos M."/>
            <person name="Seibel L."/>
            <person name="Macedo J."/>
            <person name="Alves-Ferreira M."/>
            <person name="Sachetto-Martins G."/>
            <person name="Coelho A."/>
            <person name="Santos E."/>
            <person name="Amaral G."/>
            <person name="Neves A."/>
            <person name="Pacheco A.B."/>
            <person name="Carvalho D."/>
            <person name="Lery L."/>
            <person name="Bisch P."/>
            <person name="Rossle S.C."/>
            <person name="Urmenyi T."/>
            <person name="Rael Pereira A."/>
            <person name="Silva R."/>
            <person name="Rondinelli E."/>
            <person name="von Kruger W."/>
            <person name="Martins O."/>
            <person name="Baldani J.I."/>
            <person name="Ferreira P.C."/>
        </authorList>
    </citation>
    <scope>NUCLEOTIDE SEQUENCE [LARGE SCALE GENOMIC DNA]</scope>
    <source>
        <strain>ATCC 49037 / DSM 5601 / CCUG 37298 / CIP 103539 / LMG 7603 / PAl5</strain>
    </source>
</reference>
<reference key="2">
    <citation type="journal article" date="2010" name="Stand. Genomic Sci.">
        <title>Two genome sequences of the same bacterial strain, Gluconacetobacter diazotrophicus PAl 5, suggest a new standard in genome sequence submission.</title>
        <authorList>
            <person name="Giongo A."/>
            <person name="Tyler H.L."/>
            <person name="Zipperer U.N."/>
            <person name="Triplett E.W."/>
        </authorList>
    </citation>
    <scope>NUCLEOTIDE SEQUENCE [LARGE SCALE GENOMIC DNA]</scope>
    <source>
        <strain>ATCC 49037 / DSM 5601 / CCUG 37298 / CIP 103539 / LMG 7603 / PAl5</strain>
    </source>
</reference>
<accession>A9HB20</accession>